<evidence type="ECO:0000250" key="1">
    <source>
        <dbReference type="UniProtKB" id="A5U229"/>
    </source>
</evidence>
<evidence type="ECO:0000255" key="2">
    <source>
        <dbReference type="PROSITE-ProRule" id="PRU00541"/>
    </source>
</evidence>
<evidence type="ECO:0000269" key="3">
    <source>
    </source>
</evidence>
<evidence type="ECO:0000305" key="4"/>
<feature type="chain" id="PRO_0000102003" description="ATP-dependent helicase DinG">
    <location>
        <begin position="1"/>
        <end position="664"/>
    </location>
</feature>
<feature type="domain" description="Helicase ATP-binding" evidence="2">
    <location>
        <begin position="14"/>
        <end position="290"/>
    </location>
</feature>
<feature type="short sequence motif" description="DEAH box">
    <location>
        <begin position="246"/>
        <end position="249"/>
    </location>
</feature>
<feature type="binding site" evidence="2">
    <location>
        <begin position="49"/>
        <end position="56"/>
    </location>
    <ligand>
        <name>ATP</name>
        <dbReference type="ChEBI" id="CHEBI:30616"/>
    </ligand>
</feature>
<feature type="binding site" evidence="1">
    <location>
        <position position="120"/>
    </location>
    <ligand>
        <name>[4Fe-4S] cluster</name>
        <dbReference type="ChEBI" id="CHEBI:49883"/>
    </ligand>
</feature>
<feature type="binding site" evidence="1">
    <location>
        <position position="192"/>
    </location>
    <ligand>
        <name>[4Fe-4S] cluster</name>
        <dbReference type="ChEBI" id="CHEBI:49883"/>
    </ligand>
</feature>
<feature type="binding site" evidence="1">
    <location>
        <position position="198"/>
    </location>
    <ligand>
        <name>[4Fe-4S] cluster</name>
        <dbReference type="ChEBI" id="CHEBI:49883"/>
    </ligand>
</feature>
<feature type="binding site" evidence="1">
    <location>
        <position position="204"/>
    </location>
    <ligand>
        <name>[4Fe-4S] cluster</name>
        <dbReference type="ChEBI" id="CHEBI:49883"/>
    </ligand>
</feature>
<proteinExistence type="evidence at protein level"/>
<protein>
    <recommendedName>
        <fullName evidence="1">ATP-dependent helicase DinG</fullName>
        <ecNumber evidence="1">5.6.2.3</ecNumber>
    </recommendedName>
    <alternativeName>
        <fullName evidence="4">DNA 5'-3' helicase DinG</fullName>
    </alternativeName>
</protein>
<accession>P9WMR5</accession>
<accession>L0T6J2</accession>
<accession>P64314</accession>
<accession>Q10640</accession>
<dbReference type="EC" id="5.6.2.3" evidence="1"/>
<dbReference type="EMBL" id="AL123456">
    <property type="protein sequence ID" value="CCP44087.1"/>
    <property type="molecule type" value="Genomic_DNA"/>
</dbReference>
<dbReference type="PIR" id="E70770">
    <property type="entry name" value="E70770"/>
</dbReference>
<dbReference type="RefSeq" id="NP_215845.1">
    <property type="nucleotide sequence ID" value="NC_000962.3"/>
</dbReference>
<dbReference type="RefSeq" id="WP_003898827.1">
    <property type="nucleotide sequence ID" value="NZ_NVQJ01000031.1"/>
</dbReference>
<dbReference type="SMR" id="P9WMR5"/>
<dbReference type="FunCoup" id="P9WMR5">
    <property type="interactions" value="32"/>
</dbReference>
<dbReference type="STRING" id="83332.Rv1329c"/>
<dbReference type="PaxDb" id="83332-Rv1329c"/>
<dbReference type="DNASU" id="886889"/>
<dbReference type="GeneID" id="45425307"/>
<dbReference type="GeneID" id="886889"/>
<dbReference type="KEGG" id="mtu:Rv1329c"/>
<dbReference type="KEGG" id="mtv:RVBD_1329c"/>
<dbReference type="TubercuList" id="Rv1329c"/>
<dbReference type="eggNOG" id="COG1199">
    <property type="taxonomic scope" value="Bacteria"/>
</dbReference>
<dbReference type="InParanoid" id="P9WMR5"/>
<dbReference type="OrthoDB" id="9805194at2"/>
<dbReference type="PhylomeDB" id="P9WMR5"/>
<dbReference type="Proteomes" id="UP000001584">
    <property type="component" value="Chromosome"/>
</dbReference>
<dbReference type="GO" id="GO:0005886">
    <property type="term" value="C:plasma membrane"/>
    <property type="evidence" value="ECO:0007005"/>
    <property type="project" value="MTBBASE"/>
</dbReference>
<dbReference type="GO" id="GO:0051539">
    <property type="term" value="F:4 iron, 4 sulfur cluster binding"/>
    <property type="evidence" value="ECO:0007669"/>
    <property type="project" value="UniProtKB-KW"/>
</dbReference>
<dbReference type="GO" id="GO:0005524">
    <property type="term" value="F:ATP binding"/>
    <property type="evidence" value="ECO:0007669"/>
    <property type="project" value="UniProtKB-KW"/>
</dbReference>
<dbReference type="GO" id="GO:0016887">
    <property type="term" value="F:ATP hydrolysis activity"/>
    <property type="evidence" value="ECO:0007669"/>
    <property type="project" value="RHEA"/>
</dbReference>
<dbReference type="GO" id="GO:0003677">
    <property type="term" value="F:DNA binding"/>
    <property type="evidence" value="ECO:0007669"/>
    <property type="project" value="UniProtKB-KW"/>
</dbReference>
<dbReference type="GO" id="GO:0003678">
    <property type="term" value="F:DNA helicase activity"/>
    <property type="evidence" value="ECO:0000318"/>
    <property type="project" value="GO_Central"/>
</dbReference>
<dbReference type="GO" id="GO:0046872">
    <property type="term" value="F:metal ion binding"/>
    <property type="evidence" value="ECO:0007669"/>
    <property type="project" value="UniProtKB-KW"/>
</dbReference>
<dbReference type="GO" id="GO:0006310">
    <property type="term" value="P:DNA recombination"/>
    <property type="evidence" value="ECO:0007669"/>
    <property type="project" value="UniProtKB-KW"/>
</dbReference>
<dbReference type="GO" id="GO:0006281">
    <property type="term" value="P:DNA repair"/>
    <property type="evidence" value="ECO:0007669"/>
    <property type="project" value="UniProtKB-KW"/>
</dbReference>
<dbReference type="FunFam" id="3.40.50.300:FF:000437">
    <property type="entry name" value="ATP-dependent DNA helicase DinG"/>
    <property type="match status" value="1"/>
</dbReference>
<dbReference type="Gene3D" id="3.40.50.300">
    <property type="entry name" value="P-loop containing nucleotide triphosphate hydrolases"/>
    <property type="match status" value="2"/>
</dbReference>
<dbReference type="InterPro" id="IPR006555">
    <property type="entry name" value="ATP-dep_Helicase_C"/>
</dbReference>
<dbReference type="InterPro" id="IPR011545">
    <property type="entry name" value="DEAD/DEAH_box_helicase_dom"/>
</dbReference>
<dbReference type="InterPro" id="IPR045028">
    <property type="entry name" value="DinG/Rad3-like"/>
</dbReference>
<dbReference type="InterPro" id="IPR014013">
    <property type="entry name" value="Helic_SF1/SF2_ATP-bd_DinG/Rad3"/>
</dbReference>
<dbReference type="InterPro" id="IPR014001">
    <property type="entry name" value="Helicase_ATP-bd"/>
</dbReference>
<dbReference type="InterPro" id="IPR027417">
    <property type="entry name" value="P-loop_NTPase"/>
</dbReference>
<dbReference type="PANTHER" id="PTHR11472">
    <property type="entry name" value="DNA REPAIR DEAD HELICASE RAD3/XP-D SUBFAMILY MEMBER"/>
    <property type="match status" value="1"/>
</dbReference>
<dbReference type="PANTHER" id="PTHR11472:SF34">
    <property type="entry name" value="REGULATOR OF TELOMERE ELONGATION HELICASE 1"/>
    <property type="match status" value="1"/>
</dbReference>
<dbReference type="Pfam" id="PF00270">
    <property type="entry name" value="DEAD"/>
    <property type="match status" value="1"/>
</dbReference>
<dbReference type="Pfam" id="PF13307">
    <property type="entry name" value="Helicase_C_2"/>
    <property type="match status" value="1"/>
</dbReference>
<dbReference type="SMART" id="SM00487">
    <property type="entry name" value="DEXDc"/>
    <property type="match status" value="1"/>
</dbReference>
<dbReference type="SMART" id="SM00491">
    <property type="entry name" value="HELICc2"/>
    <property type="match status" value="1"/>
</dbReference>
<dbReference type="SUPFAM" id="SSF52540">
    <property type="entry name" value="P-loop containing nucleoside triphosphate hydrolases"/>
    <property type="match status" value="2"/>
</dbReference>
<dbReference type="PROSITE" id="PS51193">
    <property type="entry name" value="HELICASE_ATP_BIND_2"/>
    <property type="match status" value="1"/>
</dbReference>
<sequence length="664" mass="70168">MSESVSMSVPELLAIAVAALGGTRRRGQQEMAAAVAHAFETGEHLVVQAGTGTGKSLAYLVPAIIRALCDDAPVVVSTATIALQRQLVDRDLPQLVDSLTNALPRRPKFALLKGRRNYLCLNKIHNSVTASDHDDERPQEELFDPVAVTALGRDVQRLTAWASTTVSGDRDDLKPGVGDRSWSQVSVSARECLGVARCPFGSECFSERARGAAGLADVVVTNHALLAIDAVAESAVLPEHRLLVVDEAHELADRVTSVAAAELTSATLGMAARRITRLVDPKVTQRLQAASATFSSAIHDARPGRIDCLDDEMATYLSALRDAASAARSAIDTGSDTTTASVRAEAGAVLTEISDTASRILASFAPAIPDRSDVVWLEHEDNHESARAVLRVAPLSVAELLATQVFARATTVLTSATLTIGGSFDAMATAWGLTADTPWRGLDVGSPFQHAKSGILYVAAHLPPPGRDGSGSAEQLTEIAELITAAGGRTLGLFSSMRAARAATEAMRERLSTPVLCQGDDSTSTLVEKFTADAATSLFGTLSLWQGVDVPGPSLSLVLIDRIPFPRPDDPLLSARQRAVAARGGNGFMTVAASHAALLLAQGSGRLLRRVTDRGVVAVLDSRMATARYGEFLRASLPPFWQTTNATQVRAALRRLARADAKAH</sequence>
<reference key="1">
    <citation type="journal article" date="1998" name="Nature">
        <title>Deciphering the biology of Mycobacterium tuberculosis from the complete genome sequence.</title>
        <authorList>
            <person name="Cole S.T."/>
            <person name="Brosch R."/>
            <person name="Parkhill J."/>
            <person name="Garnier T."/>
            <person name="Churcher C.M."/>
            <person name="Harris D.E."/>
            <person name="Gordon S.V."/>
            <person name="Eiglmeier K."/>
            <person name="Gas S."/>
            <person name="Barry C.E. III"/>
            <person name="Tekaia F."/>
            <person name="Badcock K."/>
            <person name="Basham D."/>
            <person name="Brown D."/>
            <person name="Chillingworth T."/>
            <person name="Connor R."/>
            <person name="Davies R.M."/>
            <person name="Devlin K."/>
            <person name="Feltwell T."/>
            <person name="Gentles S."/>
            <person name="Hamlin N."/>
            <person name="Holroyd S."/>
            <person name="Hornsby T."/>
            <person name="Jagels K."/>
            <person name="Krogh A."/>
            <person name="McLean J."/>
            <person name="Moule S."/>
            <person name="Murphy L.D."/>
            <person name="Oliver S."/>
            <person name="Osborne J."/>
            <person name="Quail M.A."/>
            <person name="Rajandream M.A."/>
            <person name="Rogers J."/>
            <person name="Rutter S."/>
            <person name="Seeger K."/>
            <person name="Skelton S."/>
            <person name="Squares S."/>
            <person name="Squares R."/>
            <person name="Sulston J.E."/>
            <person name="Taylor K."/>
            <person name="Whitehead S."/>
            <person name="Barrell B.G."/>
        </authorList>
    </citation>
    <scope>NUCLEOTIDE SEQUENCE [LARGE SCALE GENOMIC DNA]</scope>
    <source>
        <strain>ATCC 25618 / H37Rv</strain>
    </source>
</reference>
<reference key="2">
    <citation type="journal article" date="2003" name="Mol. Microbiol.">
        <title>Genes required for mycobacterial growth defined by high density mutagenesis.</title>
        <authorList>
            <person name="Sassetti C.M."/>
            <person name="Boyd D.H."/>
            <person name="Rubin E.J."/>
        </authorList>
    </citation>
    <scope>DISRUPTION PHENOTYPE</scope>
    <source>
        <strain>ATCC 25618 / H37Rv</strain>
    </source>
</reference>
<reference key="3">
    <citation type="journal article" date="2011" name="Mol. Cell. Proteomics">
        <title>Proteogenomic analysis of Mycobacterium tuberculosis by high resolution mass spectrometry.</title>
        <authorList>
            <person name="Kelkar D.S."/>
            <person name="Kumar D."/>
            <person name="Kumar P."/>
            <person name="Balakrishnan L."/>
            <person name="Muthusamy B."/>
            <person name="Yadav A.K."/>
            <person name="Shrivastava P."/>
            <person name="Marimuthu A."/>
            <person name="Anand S."/>
            <person name="Sundaram H."/>
            <person name="Kingsbury R."/>
            <person name="Harsha H.C."/>
            <person name="Nair B."/>
            <person name="Prasad T.S."/>
            <person name="Chauhan D.S."/>
            <person name="Katoch K."/>
            <person name="Katoch V.M."/>
            <person name="Kumar P."/>
            <person name="Chaerkady R."/>
            <person name="Ramachandran S."/>
            <person name="Dash D."/>
            <person name="Pandey A."/>
        </authorList>
    </citation>
    <scope>IDENTIFICATION BY MASS SPECTROMETRY [LARGE SCALE ANALYSIS]</scope>
    <source>
        <strain>ATCC 25618 / H37Rv</strain>
    </source>
</reference>
<organism>
    <name type="scientific">Mycobacterium tuberculosis (strain ATCC 25618 / H37Rv)</name>
    <dbReference type="NCBI Taxonomy" id="83332"/>
    <lineage>
        <taxon>Bacteria</taxon>
        <taxon>Bacillati</taxon>
        <taxon>Actinomycetota</taxon>
        <taxon>Actinomycetes</taxon>
        <taxon>Mycobacteriales</taxon>
        <taxon>Mycobacteriaceae</taxon>
        <taxon>Mycobacterium</taxon>
        <taxon>Mycobacterium tuberculosis complex</taxon>
    </lineage>
</organism>
<keyword id="KW-0004">4Fe-4S</keyword>
<keyword id="KW-0067">ATP-binding</keyword>
<keyword id="KW-0227">DNA damage</keyword>
<keyword id="KW-0233">DNA recombination</keyword>
<keyword id="KW-0234">DNA repair</keyword>
<keyword id="KW-0238">DNA-binding</keyword>
<keyword id="KW-0347">Helicase</keyword>
<keyword id="KW-0378">Hydrolase</keyword>
<keyword id="KW-0408">Iron</keyword>
<keyword id="KW-0411">Iron-sulfur</keyword>
<keyword id="KW-0413">Isomerase</keyword>
<keyword id="KW-0479">Metal-binding</keyword>
<keyword id="KW-0547">Nucleotide-binding</keyword>
<keyword id="KW-1185">Reference proteome</keyword>
<name>DING_MYCTU</name>
<comment type="function">
    <text evidence="1">A structure-dependent 5'-3' DNA helicase that unwinds a number of substrates that resemble intermediates in DNA repair, recombination and replication. Translocates on ssDNA with 5'-3' polarity.</text>
</comment>
<comment type="function">
    <text evidence="1">Unwinds G4 DNA (planar arrays of 4 guanine bases stabilized by hydrogen bonds) with both 5'- and 3'- ss-tails.</text>
</comment>
<comment type="catalytic activity">
    <reaction evidence="1">
        <text>Couples ATP hydrolysis with the unwinding of duplex DNA at the replication fork by translocating in the 5'-3' direction. This creates two antiparallel DNA single strands (ssDNA). The leading ssDNA polymer is the template for DNA polymerase III holoenzyme which synthesizes a continuous strand.</text>
        <dbReference type="EC" id="5.6.2.3"/>
    </reaction>
</comment>
<comment type="catalytic activity">
    <reaction evidence="1">
        <text>ATP + H2O = ADP + phosphate + H(+)</text>
        <dbReference type="Rhea" id="RHEA:13065"/>
        <dbReference type="ChEBI" id="CHEBI:15377"/>
        <dbReference type="ChEBI" id="CHEBI:15378"/>
        <dbReference type="ChEBI" id="CHEBI:30616"/>
        <dbReference type="ChEBI" id="CHEBI:43474"/>
        <dbReference type="ChEBI" id="CHEBI:456216"/>
        <dbReference type="EC" id="5.6.2.3"/>
    </reaction>
</comment>
<comment type="cofactor">
    <cofactor evidence="1">
        <name>[4Fe-4S] cluster</name>
        <dbReference type="ChEBI" id="CHEBI:49883"/>
    </cofactor>
</comment>
<comment type="disruption phenotype">
    <text evidence="3">Not essential, it can be deleted (PubMed:12657046).</text>
</comment>
<comment type="similarity">
    <text evidence="4">Belongs to the helicase family. DinG subfamily.</text>
</comment>
<gene>
    <name type="primary">dinG</name>
    <name type="ordered locus">Rv1329c</name>
    <name type="ORF">MTCY130.14c</name>
</gene>